<organism>
    <name type="scientific">Ovine respiratory syncytial virus (strain WSU 83-1578)</name>
    <name type="common">ORSV</name>
    <dbReference type="NCBI Taxonomy" id="79699"/>
    <lineage>
        <taxon>Viruses</taxon>
        <taxon>Riboviria</taxon>
        <taxon>Orthornavirae</taxon>
        <taxon>Negarnaviricota</taxon>
        <taxon>Haploviricotina</taxon>
        <taxon>Monjiviricetes</taxon>
        <taxon>Mononegavirales</taxon>
        <taxon>Pneumoviridae</taxon>
        <taxon>Ovine respiratory syncytial virus</taxon>
    </lineage>
</organism>
<proteinExistence type="inferred from homology"/>
<comment type="function">
    <text evidence="1">Plays a major role in antagonizing the type I IFN-mediated antiviral response. Acts cooperatively with NS1 to repress activation and nuclear translocation of host IFN-regulatory factor IRF3. Interacts with the host cytoplasmic sensor of viral nucleic acids RIGI and prevents the interaction with its downstream partner MAVS. Together with NS2, participates in the proteasomal degradation of host STAT2, IRF3, IRF7, TBK1 and RIGI through a NS-degradasome involving CUL2 and Elongin-C. The degradasome requires an intact mitochondrial MAVS. Induces host SOCS1 expression. Induces activation of NF-kappa-B. Suppresses premature apoptosis by an NF-kappa-B-dependent, interferon-independent mechanism promoting continued viral replication.</text>
</comment>
<comment type="subunit">
    <text evidence="1">Monomer (instable). Homomultimer. Heteromultimer with NS1. Interacts with host RIGI (via N-terminus); this interaction prevents host signaling pathway involved in interferon production. Interacts with host MAP1B/microtubule-associated protein 1B.</text>
</comment>
<comment type="subcellular location">
    <subcellularLocation>
        <location evidence="1">Host mitochondrion</location>
    </subcellularLocation>
    <text evidence="1">Most NS2 resides in the mitochondria as a heteromer with NS1.</text>
</comment>
<comment type="domain">
    <text evidence="1">The DNLP motif has IFN suppressive functions like binding to host MAP1B.</text>
</comment>
<comment type="similarity">
    <text evidence="2">Belongs to the pneumovirus non-structural protein 2 family.</text>
</comment>
<dbReference type="EMBL" id="L15451">
    <property type="protein sequence ID" value="AAA42813.1"/>
    <property type="molecule type" value="Genomic_RNA"/>
</dbReference>
<dbReference type="SMR" id="Q65707"/>
<dbReference type="GO" id="GO:0033650">
    <property type="term" value="C:host cell mitochondrion"/>
    <property type="evidence" value="ECO:0007669"/>
    <property type="project" value="UniProtKB-SubCell"/>
</dbReference>
<dbReference type="GO" id="GO:0052150">
    <property type="term" value="P:symbiont-mediated perturbation of host apoptosis"/>
    <property type="evidence" value="ECO:0007669"/>
    <property type="project" value="UniProtKB-KW"/>
</dbReference>
<dbReference type="GO" id="GO:0039548">
    <property type="term" value="P:symbiont-mediated suppression of host cytoplasmic pattern recognition receptor signaling pathway via inhibition of IRF3 activity"/>
    <property type="evidence" value="ECO:0007669"/>
    <property type="project" value="UniProtKB-KW"/>
</dbReference>
<dbReference type="GO" id="GO:0039557">
    <property type="term" value="P:symbiont-mediated suppression of host cytoplasmic pattern recognition receptor signaling pathway via inhibition of IRF7 activity"/>
    <property type="evidence" value="ECO:0007669"/>
    <property type="project" value="UniProtKB-KW"/>
</dbReference>
<dbReference type="GO" id="GO:0039540">
    <property type="term" value="P:symbiont-mediated suppression of host cytoplasmic pattern recognition receptor signaling pathway via inhibition of RIG-I activity"/>
    <property type="evidence" value="ECO:0007669"/>
    <property type="project" value="UniProtKB-KW"/>
</dbReference>
<dbReference type="GO" id="GO:0039723">
    <property type="term" value="P:symbiont-mediated suppression of host cytoplasmic pattern recognition receptor signaling pathway via inhibition of TBK1 activity"/>
    <property type="evidence" value="ECO:0007669"/>
    <property type="project" value="UniProtKB-KW"/>
</dbReference>
<dbReference type="GO" id="GO:0039564">
    <property type="term" value="P:symbiont-mediated suppression of host JAK-STAT cascade via inhibition of STAT2 activity"/>
    <property type="evidence" value="ECO:0007669"/>
    <property type="project" value="UniProtKB-KW"/>
</dbReference>
<dbReference type="GO" id="GO:0039722">
    <property type="term" value="P:symbiont-mediated suppression of host toll-like receptor signaling pathway"/>
    <property type="evidence" value="ECO:0007669"/>
    <property type="project" value="UniProtKB-KW"/>
</dbReference>
<dbReference type="GO" id="GO:0039502">
    <property type="term" value="P:symbiont-mediated suppression of host type I interferon-mediated signaling pathway"/>
    <property type="evidence" value="ECO:0007669"/>
    <property type="project" value="UniProtKB-KW"/>
</dbReference>
<dbReference type="InterPro" id="IPR004336">
    <property type="entry name" value="RSV_NS2"/>
</dbReference>
<dbReference type="Pfam" id="PF03113">
    <property type="entry name" value="RSV_NS2"/>
    <property type="match status" value="1"/>
</dbReference>
<accession>Q65707</accession>
<keyword id="KW-1045">Host mitochondrion</keyword>
<keyword id="KW-0945">Host-virus interaction</keyword>
<keyword id="KW-1090">Inhibition of host innate immune response by virus</keyword>
<keyword id="KW-1114">Inhibition of host interferon signaling pathway by virus</keyword>
<keyword id="KW-1092">Inhibition of host IRF3 by virus</keyword>
<keyword id="KW-1093">Inhibition of host IRF7 by virus</keyword>
<keyword id="KW-1088">Inhibition of host RIG-I by virus</keyword>
<keyword id="KW-1113">Inhibition of host RLR pathway by virus</keyword>
<keyword id="KW-1106">Inhibition of host STAT2 by virus</keyword>
<keyword id="KW-1223">Inhibition of host TBK1 by virus</keyword>
<keyword id="KW-1225">Inhibition of host TLR pathway by virus</keyword>
<keyword id="KW-0922">Interferon antiviral system evasion</keyword>
<keyword id="KW-1119">Modulation of host cell apoptosis by virus</keyword>
<keyword id="KW-0899">Viral immunoevasion</keyword>
<reference key="1">
    <citation type="journal article" date="1994" name="J. Gen. Virol.">
        <title>Nucleotide and predicted amino acid sequence analysis of the ovine respiratory syncytial virus non-structural 1C and 1B genes and the small hydrophobic protein gene.</title>
        <authorList>
            <person name="Alansari H.M."/>
            <person name="Potgieter L.N.D."/>
        </authorList>
    </citation>
    <scope>NUCLEOTIDE SEQUENCE [GENOMIC RNA]</scope>
</reference>
<sequence>MSTPNCKITTQRLVVNDMKPLSIETEIISLTKEIITHTFIYLINHECIVRKLNEQQATFTFLVNYEMKLLHKVGSTKYNRYTEYNSKYGTFPMPIFINHAGFLECIGIKPTRNTPVIYKYDLNP</sequence>
<gene>
    <name type="primary">1B</name>
    <name type="synonym">NS2</name>
</gene>
<evidence type="ECO:0000250" key="1">
    <source>
        <dbReference type="UniProtKB" id="P04543"/>
    </source>
</evidence>
<evidence type="ECO:0000305" key="2"/>
<protein>
    <recommendedName>
        <fullName>Non-structural protein 2</fullName>
        <shortName>NS2</shortName>
    </recommendedName>
    <alternativeName>
        <fullName>Non-structural protein 1B</fullName>
    </alternativeName>
</protein>
<name>NS2_ORSVW</name>
<organismHost>
    <name type="scientific">Ovis aries</name>
    <name type="common">Sheep</name>
    <dbReference type="NCBI Taxonomy" id="9940"/>
</organismHost>
<feature type="chain" id="PRO_0000142787" description="Non-structural protein 2">
    <location>
        <begin position="1"/>
        <end position="124"/>
    </location>
</feature>
<feature type="short sequence motif" description="DLNP; interaction with MAP1B" evidence="1">
    <location>
        <begin position="121"/>
        <end position="124"/>
    </location>
</feature>